<feature type="chain" id="PRO_1000025093" description="UDP-2,3-diacylglucosamine hydrolase">
    <location>
        <begin position="1"/>
        <end position="240"/>
    </location>
</feature>
<feature type="binding site" evidence="1">
    <location>
        <position position="8"/>
    </location>
    <ligand>
        <name>Mn(2+)</name>
        <dbReference type="ChEBI" id="CHEBI:29035"/>
        <label>1</label>
    </ligand>
</feature>
<feature type="binding site" evidence="1">
    <location>
        <position position="10"/>
    </location>
    <ligand>
        <name>Mn(2+)</name>
        <dbReference type="ChEBI" id="CHEBI:29035"/>
        <label>1</label>
    </ligand>
</feature>
<feature type="binding site" evidence="1">
    <location>
        <position position="41"/>
    </location>
    <ligand>
        <name>Mn(2+)</name>
        <dbReference type="ChEBI" id="CHEBI:29035"/>
        <label>1</label>
    </ligand>
</feature>
<feature type="binding site" evidence="1">
    <location>
        <position position="41"/>
    </location>
    <ligand>
        <name>Mn(2+)</name>
        <dbReference type="ChEBI" id="CHEBI:29035"/>
        <label>2</label>
    </ligand>
</feature>
<feature type="binding site" evidence="1">
    <location>
        <begin position="79"/>
        <end position="80"/>
    </location>
    <ligand>
        <name>substrate</name>
    </ligand>
</feature>
<feature type="binding site" evidence="1">
    <location>
        <position position="79"/>
    </location>
    <ligand>
        <name>Mn(2+)</name>
        <dbReference type="ChEBI" id="CHEBI:29035"/>
        <label>2</label>
    </ligand>
</feature>
<feature type="binding site" evidence="1">
    <location>
        <position position="114"/>
    </location>
    <ligand>
        <name>Mn(2+)</name>
        <dbReference type="ChEBI" id="CHEBI:29035"/>
        <label>2</label>
    </ligand>
</feature>
<feature type="binding site" evidence="1">
    <location>
        <position position="122"/>
    </location>
    <ligand>
        <name>substrate</name>
    </ligand>
</feature>
<feature type="binding site" evidence="1">
    <location>
        <position position="160"/>
    </location>
    <ligand>
        <name>substrate</name>
    </ligand>
</feature>
<feature type="binding site" evidence="1">
    <location>
        <position position="164"/>
    </location>
    <ligand>
        <name>substrate</name>
    </ligand>
</feature>
<feature type="binding site" evidence="1">
    <location>
        <position position="167"/>
    </location>
    <ligand>
        <name>substrate</name>
    </ligand>
</feature>
<feature type="binding site" evidence="1">
    <location>
        <position position="195"/>
    </location>
    <ligand>
        <name>Mn(2+)</name>
        <dbReference type="ChEBI" id="CHEBI:29035"/>
        <label>2</label>
    </ligand>
</feature>
<feature type="binding site" evidence="1">
    <location>
        <position position="195"/>
    </location>
    <ligand>
        <name>substrate</name>
    </ligand>
</feature>
<feature type="binding site" evidence="1">
    <location>
        <position position="197"/>
    </location>
    <ligand>
        <name>Mn(2+)</name>
        <dbReference type="ChEBI" id="CHEBI:29035"/>
        <label>1</label>
    </ligand>
</feature>
<reference key="1">
    <citation type="journal article" date="2005" name="Nucleic Acids Res.">
        <title>Genome dynamics and diversity of Shigella species, the etiologic agents of bacillary dysentery.</title>
        <authorList>
            <person name="Yang F."/>
            <person name="Yang J."/>
            <person name="Zhang X."/>
            <person name="Chen L."/>
            <person name="Jiang Y."/>
            <person name="Yan Y."/>
            <person name="Tang X."/>
            <person name="Wang J."/>
            <person name="Xiong Z."/>
            <person name="Dong J."/>
            <person name="Xue Y."/>
            <person name="Zhu Y."/>
            <person name="Xu X."/>
            <person name="Sun L."/>
            <person name="Chen S."/>
            <person name="Nie H."/>
            <person name="Peng J."/>
            <person name="Xu J."/>
            <person name="Wang Y."/>
            <person name="Yuan Z."/>
            <person name="Wen Y."/>
            <person name="Yao Z."/>
            <person name="Shen Y."/>
            <person name="Qiang B."/>
            <person name="Hou Y."/>
            <person name="Yu J."/>
            <person name="Jin Q."/>
        </authorList>
    </citation>
    <scope>NUCLEOTIDE SEQUENCE [LARGE SCALE GENOMIC DNA]</scope>
    <source>
        <strain>Ss046</strain>
    </source>
</reference>
<accession>Q3Z4P3</accession>
<comment type="function">
    <text evidence="1">Hydrolyzes the pyrophosphate bond of UDP-2,3-diacylglucosamine to yield 2,3-diacylglucosamine 1-phosphate (lipid X) and UMP by catalyzing the attack of water at the alpha-P atom. Involved in the biosynthesis of lipid A, a phosphorylated glycolipid that anchors the lipopolysaccharide to the outer membrane of the cell.</text>
</comment>
<comment type="catalytic activity">
    <reaction evidence="1">
        <text>UDP-2-N,3-O-bis[(3R)-3-hydroxytetradecanoyl]-alpha-D-glucosamine + H2O = 2-N,3-O-bis[(3R)-3-hydroxytetradecanoyl]-alpha-D-glucosaminyl 1-phosphate + UMP + 2 H(+)</text>
        <dbReference type="Rhea" id="RHEA:25213"/>
        <dbReference type="ChEBI" id="CHEBI:15377"/>
        <dbReference type="ChEBI" id="CHEBI:15378"/>
        <dbReference type="ChEBI" id="CHEBI:57865"/>
        <dbReference type="ChEBI" id="CHEBI:57957"/>
        <dbReference type="ChEBI" id="CHEBI:78847"/>
        <dbReference type="EC" id="3.6.1.54"/>
    </reaction>
</comment>
<comment type="cofactor">
    <cofactor evidence="1">
        <name>Mn(2+)</name>
        <dbReference type="ChEBI" id="CHEBI:29035"/>
    </cofactor>
    <text evidence="1">Binds 2 Mn(2+) ions per subunit in a binuclear metal center.</text>
</comment>
<comment type="pathway">
    <text evidence="1">Glycolipid biosynthesis; lipid IV(A) biosynthesis; lipid IV(A) from (3R)-3-hydroxytetradecanoyl-[acyl-carrier-protein] and UDP-N-acetyl-alpha-D-glucosamine: step 4/6.</text>
</comment>
<comment type="subcellular location">
    <subcellularLocation>
        <location evidence="1">Cell inner membrane</location>
        <topology evidence="1">Peripheral membrane protein</topology>
        <orientation evidence="1">Cytoplasmic side</orientation>
    </subcellularLocation>
</comment>
<comment type="similarity">
    <text evidence="1">Belongs to the LpxH family.</text>
</comment>
<gene>
    <name evidence="1" type="primary">lpxH</name>
    <name type="ordered locus">SSON_0494</name>
</gene>
<sequence length="240" mass="26938">MATLFIADLHLCVEEPAITAGFLRFLAGEARKADALYILGDLFEAWIGDDEPNPLHRQMAAAIKAVSDSGVPCYFIHGNRDFLLGKRFARESGMTLLPEEKVLELYGRRVLIMHGDTLCTDDAGYQAFRAKVHKPWLQMLFLALPLFVRKRIAARMRANSKEANSSKSLAIMDVNQNAVVSAMEKHQVQWLIHGHTHRPAVHELIANQQPAFRVVLGAWHTEGSMVKVTADDVELIHFPF</sequence>
<organism>
    <name type="scientific">Shigella sonnei (strain Ss046)</name>
    <dbReference type="NCBI Taxonomy" id="300269"/>
    <lineage>
        <taxon>Bacteria</taxon>
        <taxon>Pseudomonadati</taxon>
        <taxon>Pseudomonadota</taxon>
        <taxon>Gammaproteobacteria</taxon>
        <taxon>Enterobacterales</taxon>
        <taxon>Enterobacteriaceae</taxon>
        <taxon>Shigella</taxon>
    </lineage>
</organism>
<proteinExistence type="inferred from homology"/>
<dbReference type="EC" id="3.6.1.54" evidence="1"/>
<dbReference type="EMBL" id="CP000038">
    <property type="protein sequence ID" value="AAZ87269.1"/>
    <property type="molecule type" value="Genomic_DNA"/>
</dbReference>
<dbReference type="RefSeq" id="WP_000212262.1">
    <property type="nucleotide sequence ID" value="NC_007384.1"/>
</dbReference>
<dbReference type="SMR" id="Q3Z4P3"/>
<dbReference type="GeneID" id="93776944"/>
<dbReference type="KEGG" id="ssn:SSON_0494"/>
<dbReference type="HOGENOM" id="CLU_074586_0_0_6"/>
<dbReference type="UniPathway" id="UPA00359">
    <property type="reaction ID" value="UER00480"/>
</dbReference>
<dbReference type="Proteomes" id="UP000002529">
    <property type="component" value="Chromosome"/>
</dbReference>
<dbReference type="GO" id="GO:0005737">
    <property type="term" value="C:cytoplasm"/>
    <property type="evidence" value="ECO:0007669"/>
    <property type="project" value="InterPro"/>
</dbReference>
<dbReference type="GO" id="GO:0019897">
    <property type="term" value="C:extrinsic component of plasma membrane"/>
    <property type="evidence" value="ECO:0007669"/>
    <property type="project" value="UniProtKB-UniRule"/>
</dbReference>
<dbReference type="GO" id="GO:0030145">
    <property type="term" value="F:manganese ion binding"/>
    <property type="evidence" value="ECO:0007669"/>
    <property type="project" value="UniProtKB-UniRule"/>
</dbReference>
<dbReference type="GO" id="GO:0008758">
    <property type="term" value="F:UDP-2,3-diacylglucosamine hydrolase activity"/>
    <property type="evidence" value="ECO:0007669"/>
    <property type="project" value="UniProtKB-UniRule"/>
</dbReference>
<dbReference type="GO" id="GO:0009245">
    <property type="term" value="P:lipid A biosynthetic process"/>
    <property type="evidence" value="ECO:0007669"/>
    <property type="project" value="UniProtKB-UniRule"/>
</dbReference>
<dbReference type="CDD" id="cd07398">
    <property type="entry name" value="MPP_YbbF-LpxH"/>
    <property type="match status" value="1"/>
</dbReference>
<dbReference type="FunFam" id="3.60.21.10:FF:000012">
    <property type="entry name" value="UDP-2,3-diacylglucosamine hydrolase"/>
    <property type="match status" value="1"/>
</dbReference>
<dbReference type="Gene3D" id="3.60.21.10">
    <property type="match status" value="1"/>
</dbReference>
<dbReference type="HAMAP" id="MF_00575">
    <property type="entry name" value="LpxH"/>
    <property type="match status" value="1"/>
</dbReference>
<dbReference type="InterPro" id="IPR004843">
    <property type="entry name" value="Calcineurin-like_PHP_ApaH"/>
</dbReference>
<dbReference type="InterPro" id="IPR043461">
    <property type="entry name" value="LpxH-like"/>
</dbReference>
<dbReference type="InterPro" id="IPR029052">
    <property type="entry name" value="Metallo-depent_PP-like"/>
</dbReference>
<dbReference type="InterPro" id="IPR010138">
    <property type="entry name" value="UDP-diacylglucosamine_Hdrlase"/>
</dbReference>
<dbReference type="NCBIfam" id="TIGR01854">
    <property type="entry name" value="lipid_A_lpxH"/>
    <property type="match status" value="1"/>
</dbReference>
<dbReference type="NCBIfam" id="NF003743">
    <property type="entry name" value="PRK05340.1"/>
    <property type="match status" value="1"/>
</dbReference>
<dbReference type="PANTHER" id="PTHR34990:SF1">
    <property type="entry name" value="UDP-2,3-DIACYLGLUCOSAMINE HYDROLASE"/>
    <property type="match status" value="1"/>
</dbReference>
<dbReference type="PANTHER" id="PTHR34990">
    <property type="entry name" value="UDP-2,3-DIACYLGLUCOSAMINE HYDROLASE-RELATED"/>
    <property type="match status" value="1"/>
</dbReference>
<dbReference type="Pfam" id="PF00149">
    <property type="entry name" value="Metallophos"/>
    <property type="match status" value="1"/>
</dbReference>
<dbReference type="SUPFAM" id="SSF56300">
    <property type="entry name" value="Metallo-dependent phosphatases"/>
    <property type="match status" value="1"/>
</dbReference>
<protein>
    <recommendedName>
        <fullName evidence="1">UDP-2,3-diacylglucosamine hydrolase</fullName>
        <ecNumber evidence="1">3.6.1.54</ecNumber>
    </recommendedName>
    <alternativeName>
        <fullName evidence="1">UDP-2,3-diacylglucosamine diphosphatase</fullName>
    </alternativeName>
</protein>
<evidence type="ECO:0000255" key="1">
    <source>
        <dbReference type="HAMAP-Rule" id="MF_00575"/>
    </source>
</evidence>
<keyword id="KW-0997">Cell inner membrane</keyword>
<keyword id="KW-1003">Cell membrane</keyword>
<keyword id="KW-0378">Hydrolase</keyword>
<keyword id="KW-0441">Lipid A biosynthesis</keyword>
<keyword id="KW-0444">Lipid biosynthesis</keyword>
<keyword id="KW-0443">Lipid metabolism</keyword>
<keyword id="KW-0464">Manganese</keyword>
<keyword id="KW-0472">Membrane</keyword>
<keyword id="KW-0479">Metal-binding</keyword>
<keyword id="KW-1185">Reference proteome</keyword>
<name>LPXH_SHISS</name>